<accession>Q9RRS9</accession>
<keyword id="KW-0378">Hydrolase</keyword>
<keyword id="KW-1185">Reference proteome</keyword>
<reference key="1">
    <citation type="journal article" date="1999" name="Science">
        <title>Genome sequence of the radioresistant bacterium Deinococcus radiodurans R1.</title>
        <authorList>
            <person name="White O."/>
            <person name="Eisen J.A."/>
            <person name="Heidelberg J.F."/>
            <person name="Hickey E.K."/>
            <person name="Peterson J.D."/>
            <person name="Dodson R.J."/>
            <person name="Haft D.H."/>
            <person name="Gwinn M.L."/>
            <person name="Nelson W.C."/>
            <person name="Richardson D.L."/>
            <person name="Moffat K.S."/>
            <person name="Qin H."/>
            <person name="Jiang L."/>
            <person name="Pamphile W."/>
            <person name="Crosby M."/>
            <person name="Shen M."/>
            <person name="Vamathevan J.J."/>
            <person name="Lam P."/>
            <person name="McDonald L.A."/>
            <person name="Utterback T.R."/>
            <person name="Zalewski C."/>
            <person name="Makarova K.S."/>
            <person name="Aravind L."/>
            <person name="Daly M.J."/>
            <person name="Minton K.W."/>
            <person name="Fleischmann R.D."/>
            <person name="Ketchum K.A."/>
            <person name="Nelson K.E."/>
            <person name="Salzberg S.L."/>
            <person name="Smith H.O."/>
            <person name="Venter J.C."/>
            <person name="Fraser C.M."/>
        </authorList>
    </citation>
    <scope>NUCLEOTIDE SEQUENCE [LARGE SCALE GENOMIC DNA]</scope>
    <source>
        <strain>ATCC 13939 / DSM 20539 / JCM 16871 / CCUG 27074 / LMG 4051 / NBRC 15346 / NCIMB 9279 / VKM B-1422 / R1</strain>
    </source>
</reference>
<gene>
    <name type="ordered locus">DR_2406</name>
</gene>
<feature type="chain" id="PRO_0000156681" description="Putative esterase DR_2406">
    <location>
        <begin position="1"/>
        <end position="159"/>
    </location>
</feature>
<evidence type="ECO:0000305" key="1"/>
<proteinExistence type="inferred from homology"/>
<name>Y2406_DEIRA</name>
<protein>
    <recommendedName>
        <fullName>Putative esterase DR_2406</fullName>
        <ecNumber>3.1.2.-</ecNumber>
    </recommendedName>
</protein>
<comment type="similarity">
    <text evidence="1">Belongs to the thioesterase PaaI family.</text>
</comment>
<organism>
    <name type="scientific">Deinococcus radiodurans (strain ATCC 13939 / DSM 20539 / JCM 16871 / CCUG 27074 / LMG 4051 / NBRC 15346 / NCIMB 9279 / VKM B-1422 / R1)</name>
    <dbReference type="NCBI Taxonomy" id="243230"/>
    <lineage>
        <taxon>Bacteria</taxon>
        <taxon>Thermotogati</taxon>
        <taxon>Deinococcota</taxon>
        <taxon>Deinococci</taxon>
        <taxon>Deinococcales</taxon>
        <taxon>Deinococcaceae</taxon>
        <taxon>Deinococcus</taxon>
    </lineage>
</organism>
<dbReference type="EC" id="3.1.2.-"/>
<dbReference type="EMBL" id="AE000513">
    <property type="protein sequence ID" value="AAF11950.1"/>
    <property type="molecule type" value="Genomic_DNA"/>
</dbReference>
<dbReference type="PIR" id="G75277">
    <property type="entry name" value="G75277"/>
</dbReference>
<dbReference type="RefSeq" id="NP_296127.1">
    <property type="nucleotide sequence ID" value="NC_001263.1"/>
</dbReference>
<dbReference type="RefSeq" id="WP_010889032.1">
    <property type="nucleotide sequence ID" value="NC_001263.1"/>
</dbReference>
<dbReference type="SMR" id="Q9RRS9"/>
<dbReference type="FunCoup" id="Q9RRS9">
    <property type="interactions" value="29"/>
</dbReference>
<dbReference type="STRING" id="243230.DR_2406"/>
<dbReference type="PaxDb" id="243230-DR_2406"/>
<dbReference type="EnsemblBacteria" id="AAF11950">
    <property type="protein sequence ID" value="AAF11950"/>
    <property type="gene ID" value="DR_2406"/>
</dbReference>
<dbReference type="GeneID" id="69518659"/>
<dbReference type="KEGG" id="dra:DR_2406"/>
<dbReference type="PATRIC" id="fig|243230.17.peg.2642"/>
<dbReference type="eggNOG" id="COG2050">
    <property type="taxonomic scope" value="Bacteria"/>
</dbReference>
<dbReference type="HOGENOM" id="CLU_089876_13_2_0"/>
<dbReference type="InParanoid" id="Q9RRS9"/>
<dbReference type="OrthoDB" id="9798208at2"/>
<dbReference type="Proteomes" id="UP000002524">
    <property type="component" value="Chromosome 1"/>
</dbReference>
<dbReference type="GO" id="GO:0005829">
    <property type="term" value="C:cytosol"/>
    <property type="evidence" value="ECO:0000318"/>
    <property type="project" value="GO_Central"/>
</dbReference>
<dbReference type="GO" id="GO:0061522">
    <property type="term" value="F:1,4-dihydroxy-2-naphthoyl-CoA thioesterase activity"/>
    <property type="evidence" value="ECO:0000318"/>
    <property type="project" value="GO_Central"/>
</dbReference>
<dbReference type="CDD" id="cd03443">
    <property type="entry name" value="PaaI_thioesterase"/>
    <property type="match status" value="1"/>
</dbReference>
<dbReference type="Gene3D" id="3.10.129.10">
    <property type="entry name" value="Hotdog Thioesterase"/>
    <property type="match status" value="1"/>
</dbReference>
<dbReference type="InterPro" id="IPR029069">
    <property type="entry name" value="HotDog_dom_sf"/>
</dbReference>
<dbReference type="InterPro" id="IPR003736">
    <property type="entry name" value="PAAI_dom"/>
</dbReference>
<dbReference type="InterPro" id="IPR006683">
    <property type="entry name" value="Thioestr_dom"/>
</dbReference>
<dbReference type="NCBIfam" id="TIGR00369">
    <property type="entry name" value="unchar_dom_1"/>
    <property type="match status" value="1"/>
</dbReference>
<dbReference type="PANTHER" id="PTHR43240">
    <property type="entry name" value="1,4-DIHYDROXY-2-NAPHTHOYL-COA THIOESTERASE 1"/>
    <property type="match status" value="1"/>
</dbReference>
<dbReference type="PANTHER" id="PTHR43240:SF5">
    <property type="entry name" value="1,4-DIHYDROXY-2-NAPHTHOYL-COA THIOESTERASE 1"/>
    <property type="match status" value="1"/>
</dbReference>
<dbReference type="Pfam" id="PF03061">
    <property type="entry name" value="4HBT"/>
    <property type="match status" value="1"/>
</dbReference>
<dbReference type="SUPFAM" id="SSF54637">
    <property type="entry name" value="Thioesterase/thiol ester dehydrase-isomerase"/>
    <property type="match status" value="1"/>
</dbReference>
<sequence>MTLHPDLALPSPEDFEQLSPEALAARMNGPEGQGLPGTLGARLGIRYVSMARERVVATMPVEGNRQPAGRLHGGATLALAEELASVGSWLNLDPQRQVAVGVDLNGTHVRGVSEGHVTAEARLSYRGRSLMVWEIEMKDEKGRTTSLCRCTCNVISMGA</sequence>